<name>RL21_STAAM</name>
<gene>
    <name evidence="1" type="primary">rplU</name>
    <name type="ordered locus">SAV1647</name>
</gene>
<dbReference type="EMBL" id="BA000017">
    <property type="protein sequence ID" value="BAB57809.1"/>
    <property type="molecule type" value="Genomic_DNA"/>
</dbReference>
<dbReference type="RefSeq" id="WP_000457386.1">
    <property type="nucleotide sequence ID" value="NC_002758.2"/>
</dbReference>
<dbReference type="SMR" id="Q99TK6"/>
<dbReference type="GeneID" id="66839833"/>
<dbReference type="KEGG" id="sav:SAV1647"/>
<dbReference type="HOGENOM" id="CLU_061463_3_2_9"/>
<dbReference type="PhylomeDB" id="Q99TK6"/>
<dbReference type="Proteomes" id="UP000002481">
    <property type="component" value="Chromosome"/>
</dbReference>
<dbReference type="GO" id="GO:0005737">
    <property type="term" value="C:cytoplasm"/>
    <property type="evidence" value="ECO:0007669"/>
    <property type="project" value="UniProtKB-ARBA"/>
</dbReference>
<dbReference type="GO" id="GO:1990904">
    <property type="term" value="C:ribonucleoprotein complex"/>
    <property type="evidence" value="ECO:0007669"/>
    <property type="project" value="UniProtKB-KW"/>
</dbReference>
<dbReference type="GO" id="GO:0005840">
    <property type="term" value="C:ribosome"/>
    <property type="evidence" value="ECO:0007669"/>
    <property type="project" value="UniProtKB-KW"/>
</dbReference>
<dbReference type="GO" id="GO:0019843">
    <property type="term" value="F:rRNA binding"/>
    <property type="evidence" value="ECO:0007669"/>
    <property type="project" value="UniProtKB-UniRule"/>
</dbReference>
<dbReference type="GO" id="GO:0003735">
    <property type="term" value="F:structural constituent of ribosome"/>
    <property type="evidence" value="ECO:0007669"/>
    <property type="project" value="InterPro"/>
</dbReference>
<dbReference type="GO" id="GO:0006412">
    <property type="term" value="P:translation"/>
    <property type="evidence" value="ECO:0007669"/>
    <property type="project" value="UniProtKB-UniRule"/>
</dbReference>
<dbReference type="HAMAP" id="MF_01363">
    <property type="entry name" value="Ribosomal_bL21"/>
    <property type="match status" value="1"/>
</dbReference>
<dbReference type="InterPro" id="IPR028909">
    <property type="entry name" value="bL21-like"/>
</dbReference>
<dbReference type="InterPro" id="IPR036164">
    <property type="entry name" value="bL21-like_sf"/>
</dbReference>
<dbReference type="InterPro" id="IPR001787">
    <property type="entry name" value="Ribosomal_bL21"/>
</dbReference>
<dbReference type="NCBIfam" id="TIGR00061">
    <property type="entry name" value="L21"/>
    <property type="match status" value="1"/>
</dbReference>
<dbReference type="PANTHER" id="PTHR21349">
    <property type="entry name" value="50S RIBOSOMAL PROTEIN L21"/>
    <property type="match status" value="1"/>
</dbReference>
<dbReference type="PANTHER" id="PTHR21349:SF0">
    <property type="entry name" value="LARGE RIBOSOMAL SUBUNIT PROTEIN BL21M"/>
    <property type="match status" value="1"/>
</dbReference>
<dbReference type="Pfam" id="PF00829">
    <property type="entry name" value="Ribosomal_L21p"/>
    <property type="match status" value="1"/>
</dbReference>
<dbReference type="SUPFAM" id="SSF141091">
    <property type="entry name" value="L21p-like"/>
    <property type="match status" value="1"/>
</dbReference>
<evidence type="ECO:0000255" key="1">
    <source>
        <dbReference type="HAMAP-Rule" id="MF_01363"/>
    </source>
</evidence>
<evidence type="ECO:0000256" key="2">
    <source>
        <dbReference type="SAM" id="MobiDB-lite"/>
    </source>
</evidence>
<evidence type="ECO:0000305" key="3"/>
<sequence length="102" mass="11333">MFAIIETGGKQIKVEEGQEIFVEKLDVNEGDTFTFDKVLFVGGDSVKVGAPTVEGATVTATVNKQGRGKKITVFTYKRRKNSKRKKGHRQPYTKLTIDKINA</sequence>
<reference key="1">
    <citation type="journal article" date="2001" name="Lancet">
        <title>Whole genome sequencing of meticillin-resistant Staphylococcus aureus.</title>
        <authorList>
            <person name="Kuroda M."/>
            <person name="Ohta T."/>
            <person name="Uchiyama I."/>
            <person name="Baba T."/>
            <person name="Yuzawa H."/>
            <person name="Kobayashi I."/>
            <person name="Cui L."/>
            <person name="Oguchi A."/>
            <person name="Aoki K."/>
            <person name="Nagai Y."/>
            <person name="Lian J.-Q."/>
            <person name="Ito T."/>
            <person name="Kanamori M."/>
            <person name="Matsumaru H."/>
            <person name="Maruyama A."/>
            <person name="Murakami H."/>
            <person name="Hosoyama A."/>
            <person name="Mizutani-Ui Y."/>
            <person name="Takahashi N.K."/>
            <person name="Sawano T."/>
            <person name="Inoue R."/>
            <person name="Kaito C."/>
            <person name="Sekimizu K."/>
            <person name="Hirakawa H."/>
            <person name="Kuhara S."/>
            <person name="Goto S."/>
            <person name="Yabuzaki J."/>
            <person name="Kanehisa M."/>
            <person name="Yamashita A."/>
            <person name="Oshima K."/>
            <person name="Furuya K."/>
            <person name="Yoshino C."/>
            <person name="Shiba T."/>
            <person name="Hattori M."/>
            <person name="Ogasawara N."/>
            <person name="Hayashi H."/>
            <person name="Hiramatsu K."/>
        </authorList>
    </citation>
    <scope>NUCLEOTIDE SEQUENCE [LARGE SCALE GENOMIC DNA]</scope>
    <source>
        <strain>Mu50 / ATCC 700699</strain>
    </source>
</reference>
<comment type="function">
    <text evidence="1">This protein binds to 23S rRNA in the presence of protein L20.</text>
</comment>
<comment type="subunit">
    <text evidence="1">Part of the 50S ribosomal subunit. Contacts protein L20.</text>
</comment>
<comment type="similarity">
    <text evidence="1">Belongs to the bacterial ribosomal protein bL21 family.</text>
</comment>
<accession>Q99TK6</accession>
<keyword id="KW-0687">Ribonucleoprotein</keyword>
<keyword id="KW-0689">Ribosomal protein</keyword>
<keyword id="KW-0694">RNA-binding</keyword>
<keyword id="KW-0699">rRNA-binding</keyword>
<feature type="chain" id="PRO_0000224936" description="Large ribosomal subunit protein bL21">
    <location>
        <begin position="1"/>
        <end position="102"/>
    </location>
</feature>
<feature type="region of interest" description="Disordered" evidence="2">
    <location>
        <begin position="80"/>
        <end position="102"/>
    </location>
</feature>
<feature type="compositionally biased region" description="Basic residues" evidence="2">
    <location>
        <begin position="80"/>
        <end position="91"/>
    </location>
</feature>
<protein>
    <recommendedName>
        <fullName evidence="1">Large ribosomal subunit protein bL21</fullName>
    </recommendedName>
    <alternativeName>
        <fullName evidence="3">50S ribosomal protein L21</fullName>
    </alternativeName>
</protein>
<organism>
    <name type="scientific">Staphylococcus aureus (strain Mu50 / ATCC 700699)</name>
    <dbReference type="NCBI Taxonomy" id="158878"/>
    <lineage>
        <taxon>Bacteria</taxon>
        <taxon>Bacillati</taxon>
        <taxon>Bacillota</taxon>
        <taxon>Bacilli</taxon>
        <taxon>Bacillales</taxon>
        <taxon>Staphylococcaceae</taxon>
        <taxon>Staphylococcus</taxon>
    </lineage>
</organism>
<proteinExistence type="inferred from homology"/>